<reference key="1">
    <citation type="journal article" date="2000" name="DNA Res.">
        <title>Structural analysis of Arabidopsis thaliana chromosome 3. I. Sequence features of the regions of 4,504,864 bp covered by sixty P1 and TAC clones.</title>
        <authorList>
            <person name="Sato S."/>
            <person name="Nakamura Y."/>
            <person name="Kaneko T."/>
            <person name="Katoh T."/>
            <person name="Asamizu E."/>
            <person name="Tabata S."/>
        </authorList>
    </citation>
    <scope>NUCLEOTIDE SEQUENCE [LARGE SCALE GENOMIC DNA]</scope>
    <source>
        <strain>cv. Columbia</strain>
    </source>
</reference>
<reference key="2">
    <citation type="journal article" date="2017" name="Plant J.">
        <title>Araport11: a complete reannotation of the Arabidopsis thaliana reference genome.</title>
        <authorList>
            <person name="Cheng C.Y."/>
            <person name="Krishnakumar V."/>
            <person name="Chan A.P."/>
            <person name="Thibaud-Nissen F."/>
            <person name="Schobel S."/>
            <person name="Town C.D."/>
        </authorList>
    </citation>
    <scope>GENOME REANNOTATION</scope>
    <source>
        <strain>cv. Columbia</strain>
    </source>
</reference>
<reference key="3">
    <citation type="submission" date="2005-02" db="EMBL/GenBank/DDBJ databases">
        <title>Arabidopsis ORF clones.</title>
        <authorList>
            <person name="Cheuk R.F."/>
            <person name="Chen H."/>
            <person name="Kim C.J."/>
            <person name="Shinn P."/>
            <person name="Ecker J.R."/>
        </authorList>
    </citation>
    <scope>NUCLEOTIDE SEQUENCE [LARGE SCALE MRNA]</scope>
    <source>
        <strain>cv. Columbia</strain>
    </source>
</reference>
<reference key="4">
    <citation type="journal article" date="2011" name="Trends Plant Sci.">
        <title>Fibrillin protein function: the tip of the iceberg?</title>
        <authorList>
            <person name="Singh D.K."/>
            <person name="McNellis T.W."/>
        </authorList>
    </citation>
    <scope>GENE FAMILY</scope>
    <scope>NOMENCLATURE</scope>
</reference>
<reference key="5">
    <citation type="journal article" date="2012" name="Plant Physiol.">
        <title>The functional network of the Arabidopsis plastoglobule proteome based on quantitative proteomics and genome-wide coexpression analysis.</title>
        <authorList>
            <person name="Lundquist P.K."/>
            <person name="Poliakov A."/>
            <person name="Bhuiyan N.H."/>
            <person name="Zybailov B."/>
            <person name="Sun Q."/>
            <person name="van Wijk K.J."/>
        </authorList>
    </citation>
    <scope>SUBCELLULAR LOCATION [LARGE SCALE ANALYSIS]</scope>
    <source>
        <strain>cv. Columbia</strain>
    </source>
</reference>
<sequence length="234" mass="26249">MALPWCLKTGVLTSPAAGFNHPSDSGFAVPTKLLSIRKGDRERLRIQAVFSFPPRNGGAEKRKQLKHELVEAIEPLERGATASPDDQLLIDQLARKVEAVNPTKEPLKSDLINGKWELIYTTSAAILQAKKPRFLRSLTNYQCINMDTLKVQRMETWPFYNSVTGDLTPLNSKTVAVKLQVFKILGFIPVKAPDGTARGELEITYVDEELRISRGKGNLLFILKMFDPTYRIPL</sequence>
<protein>
    <recommendedName>
        <fullName>Probable plastid-lipid-associated protein 5, chloroplastic</fullName>
    </recommendedName>
    <alternativeName>
        <fullName>Fibrillin-3b</fullName>
    </alternativeName>
</protein>
<feature type="transit peptide" description="Chloroplast" evidence="1">
    <location>
        <begin position="1"/>
        <end position="45"/>
    </location>
</feature>
<feature type="chain" id="PRO_0000286534" description="Probable plastid-lipid-associated protein 5, chloroplastic">
    <location>
        <begin position="46"/>
        <end position="234"/>
    </location>
</feature>
<gene>
    <name type="primary">PAP5</name>
    <name type="synonym">FBN3b</name>
    <name type="synonym">FIB3b</name>
    <name type="ordered locus">At3g26080</name>
    <name type="ORF">MPE11.25</name>
</gene>
<accession>Q6DBN2</accession>
<accession>Q9LU84</accession>
<organism>
    <name type="scientific">Arabidopsis thaliana</name>
    <name type="common">Mouse-ear cress</name>
    <dbReference type="NCBI Taxonomy" id="3702"/>
    <lineage>
        <taxon>Eukaryota</taxon>
        <taxon>Viridiplantae</taxon>
        <taxon>Streptophyta</taxon>
        <taxon>Embryophyta</taxon>
        <taxon>Tracheophyta</taxon>
        <taxon>Spermatophyta</taxon>
        <taxon>Magnoliopsida</taxon>
        <taxon>eudicotyledons</taxon>
        <taxon>Gunneridae</taxon>
        <taxon>Pentapetalae</taxon>
        <taxon>rosids</taxon>
        <taxon>malvids</taxon>
        <taxon>Brassicales</taxon>
        <taxon>Brassicaceae</taxon>
        <taxon>Camelineae</taxon>
        <taxon>Arabidopsis</taxon>
    </lineage>
</organism>
<dbReference type="EMBL" id="AB023041">
    <property type="protein sequence ID" value="BAB01071.1"/>
    <property type="status" value="ALT_SEQ"/>
    <property type="molecule type" value="Genomic_DNA"/>
</dbReference>
<dbReference type="EMBL" id="CP002686">
    <property type="protein sequence ID" value="AEE77112.1"/>
    <property type="molecule type" value="Genomic_DNA"/>
</dbReference>
<dbReference type="EMBL" id="BT014990">
    <property type="protein sequence ID" value="AAT70441.1"/>
    <property type="molecule type" value="mRNA"/>
</dbReference>
<dbReference type="EMBL" id="BT020596">
    <property type="protein sequence ID" value="AAW80869.1"/>
    <property type="molecule type" value="mRNA"/>
</dbReference>
<dbReference type="RefSeq" id="NP_189237.2">
    <property type="nucleotide sequence ID" value="NM_113512.4"/>
</dbReference>
<dbReference type="SMR" id="Q6DBN2"/>
<dbReference type="FunCoup" id="Q6DBN2">
    <property type="interactions" value="165"/>
</dbReference>
<dbReference type="STRING" id="3702.Q6DBN2"/>
<dbReference type="PaxDb" id="3702-AT3G26080.1"/>
<dbReference type="EnsemblPlants" id="AT3G26080.1">
    <property type="protein sequence ID" value="AT3G26080.1"/>
    <property type="gene ID" value="AT3G26080"/>
</dbReference>
<dbReference type="GeneID" id="822205"/>
<dbReference type="Gramene" id="AT3G26080.1">
    <property type="protein sequence ID" value="AT3G26080.1"/>
    <property type="gene ID" value="AT3G26080"/>
</dbReference>
<dbReference type="KEGG" id="ath:AT3G26080"/>
<dbReference type="Araport" id="AT3G26080"/>
<dbReference type="TAIR" id="AT3G26080">
    <property type="gene designation" value="FBN3B"/>
</dbReference>
<dbReference type="eggNOG" id="ENOG502QSMF">
    <property type="taxonomic scope" value="Eukaryota"/>
</dbReference>
<dbReference type="HOGENOM" id="CLU_069245_0_1_1"/>
<dbReference type="InParanoid" id="Q6DBN2"/>
<dbReference type="OMA" id="PTHVATQ"/>
<dbReference type="PhylomeDB" id="Q6DBN2"/>
<dbReference type="PRO" id="PR:Q6DBN2"/>
<dbReference type="Proteomes" id="UP000006548">
    <property type="component" value="Chromosome 3"/>
</dbReference>
<dbReference type="ExpressionAtlas" id="Q6DBN2">
    <property type="expression patterns" value="baseline and differential"/>
</dbReference>
<dbReference type="GO" id="GO:0009507">
    <property type="term" value="C:chloroplast"/>
    <property type="evidence" value="ECO:0007005"/>
    <property type="project" value="TAIR"/>
</dbReference>
<dbReference type="GO" id="GO:0009535">
    <property type="term" value="C:chloroplast thylakoid membrane"/>
    <property type="evidence" value="ECO:0007005"/>
    <property type="project" value="TAIR"/>
</dbReference>
<dbReference type="InterPro" id="IPR039633">
    <property type="entry name" value="PAP"/>
</dbReference>
<dbReference type="InterPro" id="IPR006843">
    <property type="entry name" value="PAP/fibrillin_dom"/>
</dbReference>
<dbReference type="PANTHER" id="PTHR31906">
    <property type="entry name" value="PLASTID-LIPID-ASSOCIATED PROTEIN 4, CHLOROPLASTIC-RELATED"/>
    <property type="match status" value="1"/>
</dbReference>
<dbReference type="Pfam" id="PF04755">
    <property type="entry name" value="PAP_fibrillin"/>
    <property type="match status" value="2"/>
</dbReference>
<proteinExistence type="evidence at transcript level"/>
<evidence type="ECO:0000255" key="1"/>
<evidence type="ECO:0000269" key="2">
    <source>
    </source>
</evidence>
<evidence type="ECO:0000305" key="3"/>
<name>PAP5_ARATH</name>
<keyword id="KW-0150">Chloroplast</keyword>
<keyword id="KW-0934">Plastid</keyword>
<keyword id="KW-1185">Reference proteome</keyword>
<keyword id="KW-0793">Thylakoid</keyword>
<keyword id="KW-0809">Transit peptide</keyword>
<comment type="subcellular location">
    <subcellularLocation>
        <location evidence="2">Plastid</location>
        <location evidence="2">Chloroplast thylakoid</location>
    </subcellularLocation>
    <text evidence="2">Located in thylakoid as a peripheral protein at the stromal side.</text>
</comment>
<comment type="similarity">
    <text evidence="3">Belongs to the PAP/fibrillin family.</text>
</comment>
<comment type="sequence caution" evidence="3">
    <conflict type="erroneous gene model prediction">
        <sequence resource="EMBL-CDS" id="BAB01071"/>
    </conflict>
</comment>